<sequence>KNKRLTKGGKKGAKKKVVDPFSKKDWYDVKAPAMFNIRNIGKTLVTRTQGTKIASDGLKGRVFEVSLADLQNDEVAFRKFKLITEDVQGKNCLTNFHGMDLTRDKMCSMVKKWQTMIEAHVDVKTTDGYLLRLFCVGFTKKRNNQIRKTSYAQHQQVRQIRKKMMEIMTREVQTNDLKEVVNKLIPDSIGKDIEKACQSIYPLHDVFVRKVKMLKKPKFELGKLMELHGEGSSSGKATGDETGAKVERADGYEPPVQESV</sequence>
<accession>P61246</accession>
<accession>P33443</accession>
<accession>P49241</accession>
<organism>
    <name type="scientific">Felis catus</name>
    <name type="common">Cat</name>
    <name type="synonym">Felis silvestris catus</name>
    <dbReference type="NCBI Taxonomy" id="9685"/>
    <lineage>
        <taxon>Eukaryota</taxon>
        <taxon>Metazoa</taxon>
        <taxon>Chordata</taxon>
        <taxon>Craniata</taxon>
        <taxon>Vertebrata</taxon>
        <taxon>Euteleostomi</taxon>
        <taxon>Mammalia</taxon>
        <taxon>Eutheria</taxon>
        <taxon>Laurasiatheria</taxon>
        <taxon>Carnivora</taxon>
        <taxon>Feliformia</taxon>
        <taxon>Felidae</taxon>
        <taxon>Felinae</taxon>
        <taxon>Felis</taxon>
    </lineage>
</organism>
<dbReference type="EMBL" id="U22231">
    <property type="protein sequence ID" value="AAB01669.1"/>
    <property type="molecule type" value="mRNA"/>
</dbReference>
<dbReference type="PIR" id="PC4158">
    <property type="entry name" value="PC4158"/>
</dbReference>
<dbReference type="SMR" id="P61246"/>
<dbReference type="STRING" id="9685.ENSFCAP00000018613"/>
<dbReference type="PaxDb" id="9685-ENSFCAP00000018613"/>
<dbReference type="eggNOG" id="KOG1628">
    <property type="taxonomic scope" value="Eukaryota"/>
</dbReference>
<dbReference type="HOGENOM" id="CLU_062507_0_1_1"/>
<dbReference type="InParanoid" id="P61246"/>
<dbReference type="Proteomes" id="UP000011712">
    <property type="component" value="Unplaced"/>
</dbReference>
<dbReference type="GO" id="GO:0005829">
    <property type="term" value="C:cytosol"/>
    <property type="evidence" value="ECO:0000318"/>
    <property type="project" value="GO_Central"/>
</dbReference>
<dbReference type="GO" id="GO:0005730">
    <property type="term" value="C:nucleolus"/>
    <property type="evidence" value="ECO:0007669"/>
    <property type="project" value="UniProtKB-SubCell"/>
</dbReference>
<dbReference type="GO" id="GO:1990904">
    <property type="term" value="C:ribonucleoprotein complex"/>
    <property type="evidence" value="ECO:0000250"/>
    <property type="project" value="UniProtKB"/>
</dbReference>
<dbReference type="GO" id="GO:0005840">
    <property type="term" value="C:ribosome"/>
    <property type="evidence" value="ECO:0007669"/>
    <property type="project" value="UniProtKB-KW"/>
</dbReference>
<dbReference type="GO" id="GO:0032040">
    <property type="term" value="C:small-subunit processome"/>
    <property type="evidence" value="ECO:0000250"/>
    <property type="project" value="UniProtKB"/>
</dbReference>
<dbReference type="GO" id="GO:0003735">
    <property type="term" value="F:structural constituent of ribosome"/>
    <property type="evidence" value="ECO:0007669"/>
    <property type="project" value="InterPro"/>
</dbReference>
<dbReference type="GO" id="GO:0030154">
    <property type="term" value="P:cell differentiation"/>
    <property type="evidence" value="ECO:0007669"/>
    <property type="project" value="UniProtKB-KW"/>
</dbReference>
<dbReference type="GO" id="GO:0042274">
    <property type="term" value="P:ribosomal small subunit biogenesis"/>
    <property type="evidence" value="ECO:0000250"/>
    <property type="project" value="UniProtKB"/>
</dbReference>
<dbReference type="GO" id="GO:0006412">
    <property type="term" value="P:translation"/>
    <property type="evidence" value="ECO:0007669"/>
    <property type="project" value="InterPro"/>
</dbReference>
<dbReference type="HAMAP" id="MF_03122">
    <property type="entry name" value="Ribosomal_eS1_euk"/>
    <property type="match status" value="1"/>
</dbReference>
<dbReference type="InterPro" id="IPR001593">
    <property type="entry name" value="Ribosomal_eS1"/>
</dbReference>
<dbReference type="InterPro" id="IPR018281">
    <property type="entry name" value="Ribosomal_eS1_CS"/>
</dbReference>
<dbReference type="InterPro" id="IPR027500">
    <property type="entry name" value="Ribosomal_eS1_euk"/>
</dbReference>
<dbReference type="PANTHER" id="PTHR11830">
    <property type="entry name" value="40S RIBOSOMAL PROTEIN S3A"/>
    <property type="match status" value="1"/>
</dbReference>
<dbReference type="Pfam" id="PF01015">
    <property type="entry name" value="Ribosomal_S3Ae"/>
    <property type="match status" value="1"/>
</dbReference>
<dbReference type="SMART" id="SM01397">
    <property type="entry name" value="Ribosomal_S3Ae"/>
    <property type="match status" value="1"/>
</dbReference>
<dbReference type="PROSITE" id="PS01191">
    <property type="entry name" value="RIBOSOMAL_S3AE"/>
    <property type="match status" value="1"/>
</dbReference>
<feature type="chain" id="PRO_0000153523" description="Small ribosomal subunit protein eS1">
    <location>
        <begin position="1" status="less than"/>
        <end position="260"/>
    </location>
</feature>
<feature type="region of interest" description="Disordered" evidence="4">
    <location>
        <begin position="228"/>
        <end position="260"/>
    </location>
</feature>
<feature type="compositionally biased region" description="Basic and acidic residues" evidence="4">
    <location>
        <begin position="238"/>
        <end position="251"/>
    </location>
</feature>
<feature type="modified residue" description="N6-acetyllysine; alternate" evidence="1">
    <location>
        <position position="30"/>
    </location>
</feature>
<feature type="modified residue" description="N6-acetyllysine" evidence="2">
    <location>
        <position position="52"/>
    </location>
</feature>
<feature type="modified residue" description="ADP-ribosyltyrosine" evidence="1">
    <location>
        <position position="151"/>
    </location>
</feature>
<feature type="modified residue" description="Phosphoserine" evidence="1">
    <location>
        <position position="232"/>
    </location>
</feature>
<feature type="modified residue" description="Phosphoserine" evidence="2">
    <location>
        <position position="233"/>
    </location>
</feature>
<feature type="modified residue" description="N6-acetyllysine; alternate" evidence="1">
    <location>
        <position position="245"/>
    </location>
</feature>
<feature type="modified residue" description="Phosphotyrosine" evidence="1">
    <location>
        <position position="252"/>
    </location>
</feature>
<feature type="modified residue" description="Phosphoserine" evidence="1">
    <location>
        <position position="259"/>
    </location>
</feature>
<feature type="cross-link" description="Glycyl lysine isopeptide (Lys-Gly) (interchain with G-Cter in SUMO2); alternate" evidence="1">
    <location>
        <position position="30"/>
    </location>
</feature>
<feature type="cross-link" description="Glycyl lysine isopeptide (Lys-Gly) (interchain with G-Cter in SUMO2); alternate" evidence="1">
    <location>
        <position position="245"/>
    </location>
</feature>
<feature type="non-terminal residue">
    <location>
        <position position="1"/>
    </location>
</feature>
<keyword id="KW-0007">Acetylation</keyword>
<keyword id="KW-0013">ADP-ribosylation</keyword>
<keyword id="KW-0963">Cytoplasm</keyword>
<keyword id="KW-0221">Differentiation</keyword>
<keyword id="KW-1017">Isopeptide bond</keyword>
<keyword id="KW-0539">Nucleus</keyword>
<keyword id="KW-0597">Phosphoprotein</keyword>
<keyword id="KW-1185">Reference proteome</keyword>
<keyword id="KW-0687">Ribonucleoprotein</keyword>
<keyword id="KW-0689">Ribosomal protein</keyword>
<keyword id="KW-0832">Ubl conjugation</keyword>
<evidence type="ECO:0000250" key="1">
    <source>
        <dbReference type="UniProtKB" id="P61247"/>
    </source>
</evidence>
<evidence type="ECO:0000250" key="2">
    <source>
        <dbReference type="UniProtKB" id="P97351"/>
    </source>
</evidence>
<evidence type="ECO:0000255" key="3">
    <source>
        <dbReference type="HAMAP-Rule" id="MF_03122"/>
    </source>
</evidence>
<evidence type="ECO:0000256" key="4">
    <source>
        <dbReference type="SAM" id="MobiDB-lite"/>
    </source>
</evidence>
<evidence type="ECO:0000305" key="5"/>
<comment type="function">
    <text evidence="1 3">Component of the small ribosomal subunit. The ribosome is a large ribonucleoprotein complex responsible for the synthesis of proteins in the cell. Part of the small subunit (SSU) processome, first precursor of the small eukaryotic ribosomal subunit. During the assembly of the SSU processome in the nucleolus, many ribosome biogenesis factors, an RNA chaperone and ribosomal proteins associate with the nascent pre-rRNA and work in concert to generate RNA folding, modifications, rearrangements and cleavage as well as targeted degradation of pre-ribosomal RNA by the RNA exosome (By similarity). May play a role during erythropoiesis through regulation of transcription factor DDIT3 (By similarity).</text>
</comment>
<comment type="subunit">
    <text evidence="1">Component of the small ribosomal subunit. Mature ribosomes consist of a small (40S) and a large (60S) subunit. The 40S subunit contains about 33 different proteins and 1 molecule of RNA (18S). The 60S subunit contains about 49 different proteins and 3 molecules of RNA (28S, 5.8S and 5S). Identified in a IGF2BP1-dependent mRNP granule complex containing untranslated mRNAs. Binds with high affinity to IPO4. Interacts with DDIT3. Part of the small subunit (SSU) processome, composed of more than 70 proteins and the RNA chaperone small nucleolar RNA (snoRNA) U3.</text>
</comment>
<comment type="subcellular location">
    <subcellularLocation>
        <location evidence="2 3">Cytoplasm</location>
    </subcellularLocation>
    <subcellularLocation>
        <location evidence="2 3">Nucleus</location>
    </subcellularLocation>
    <subcellularLocation>
        <location evidence="1">Nucleus</location>
        <location evidence="1">Nucleolus</location>
    </subcellularLocation>
    <text evidence="2">Localized in cytoplasmic mRNP granules containing untranslated mRNAs.</text>
</comment>
<comment type="PTM">
    <text evidence="1">ADP-ribosylated at Tyr-151 by PARP1 in presence of HPF1.</text>
</comment>
<comment type="similarity">
    <text evidence="3">Belongs to the eukaryotic ribosomal protein eS1 family.</text>
</comment>
<proteinExistence type="evidence at transcript level"/>
<protein>
    <recommendedName>
        <fullName evidence="3">Small ribosomal subunit protein eS1</fullName>
    </recommendedName>
    <alternativeName>
        <fullName evidence="5">40S ribosomal protein S3a</fullName>
    </alternativeName>
</protein>
<name>RS3A_FELCA</name>
<reference key="1">
    <citation type="journal article" date="1996" name="Biochem. Biophys. Res. Commun.">
        <title>Primary sequence and evolutionary conservation of ribosomal protein genes from the domestic cat.</title>
        <authorList>
            <person name="Starkey C.R."/>
            <person name="Menon R.P."/>
            <person name="Prabhu S."/>
            <person name="Levy L.S."/>
        </authorList>
    </citation>
    <scope>NUCLEOTIDE SEQUENCE [MRNA]</scope>
    <source>
        <tissue>Thymic lymphoma</tissue>
    </source>
</reference>
<gene>
    <name evidence="3" type="primary">RPS3A</name>
</gene>